<proteinExistence type="inferred from homology"/>
<dbReference type="EMBL" id="CP000644">
    <property type="protein sequence ID" value="ABO91340.1"/>
    <property type="molecule type" value="Genomic_DNA"/>
</dbReference>
<dbReference type="RefSeq" id="WP_005311678.1">
    <property type="nucleotide sequence ID" value="NC_009348.1"/>
</dbReference>
<dbReference type="SMR" id="A4SR18"/>
<dbReference type="STRING" id="29491.GCA_000820065_03753"/>
<dbReference type="GeneID" id="92724685"/>
<dbReference type="KEGG" id="asa:ASA_3362"/>
<dbReference type="eggNOG" id="COG0211">
    <property type="taxonomic scope" value="Bacteria"/>
</dbReference>
<dbReference type="HOGENOM" id="CLU_095424_4_1_6"/>
<dbReference type="Proteomes" id="UP000000225">
    <property type="component" value="Chromosome"/>
</dbReference>
<dbReference type="GO" id="GO:0022625">
    <property type="term" value="C:cytosolic large ribosomal subunit"/>
    <property type="evidence" value="ECO:0007669"/>
    <property type="project" value="TreeGrafter"/>
</dbReference>
<dbReference type="GO" id="GO:0003735">
    <property type="term" value="F:structural constituent of ribosome"/>
    <property type="evidence" value="ECO:0007669"/>
    <property type="project" value="InterPro"/>
</dbReference>
<dbReference type="GO" id="GO:0006412">
    <property type="term" value="P:translation"/>
    <property type="evidence" value="ECO:0007669"/>
    <property type="project" value="UniProtKB-UniRule"/>
</dbReference>
<dbReference type="FunFam" id="2.40.50.100:FF:000001">
    <property type="entry name" value="50S ribosomal protein L27"/>
    <property type="match status" value="1"/>
</dbReference>
<dbReference type="Gene3D" id="2.40.50.100">
    <property type="match status" value="1"/>
</dbReference>
<dbReference type="HAMAP" id="MF_00539">
    <property type="entry name" value="Ribosomal_bL27"/>
    <property type="match status" value="1"/>
</dbReference>
<dbReference type="InterPro" id="IPR001684">
    <property type="entry name" value="Ribosomal_bL27"/>
</dbReference>
<dbReference type="InterPro" id="IPR018261">
    <property type="entry name" value="Ribosomal_bL27_CS"/>
</dbReference>
<dbReference type="NCBIfam" id="TIGR00062">
    <property type="entry name" value="L27"/>
    <property type="match status" value="1"/>
</dbReference>
<dbReference type="PANTHER" id="PTHR15893:SF0">
    <property type="entry name" value="LARGE RIBOSOMAL SUBUNIT PROTEIN BL27M"/>
    <property type="match status" value="1"/>
</dbReference>
<dbReference type="PANTHER" id="PTHR15893">
    <property type="entry name" value="RIBOSOMAL PROTEIN L27"/>
    <property type="match status" value="1"/>
</dbReference>
<dbReference type="Pfam" id="PF01016">
    <property type="entry name" value="Ribosomal_L27"/>
    <property type="match status" value="1"/>
</dbReference>
<dbReference type="PRINTS" id="PR00063">
    <property type="entry name" value="RIBOSOMALL27"/>
</dbReference>
<dbReference type="SUPFAM" id="SSF110324">
    <property type="entry name" value="Ribosomal L27 protein-like"/>
    <property type="match status" value="1"/>
</dbReference>
<dbReference type="PROSITE" id="PS00831">
    <property type="entry name" value="RIBOSOMAL_L27"/>
    <property type="match status" value="1"/>
</dbReference>
<feature type="chain" id="PRO_1000017400" description="Large ribosomal subunit protein bL27">
    <location>
        <begin position="1"/>
        <end position="85"/>
    </location>
</feature>
<feature type="region of interest" description="Disordered" evidence="2">
    <location>
        <begin position="1"/>
        <end position="20"/>
    </location>
</feature>
<name>RL27_AERS4</name>
<organism>
    <name type="scientific">Aeromonas salmonicida (strain A449)</name>
    <dbReference type="NCBI Taxonomy" id="382245"/>
    <lineage>
        <taxon>Bacteria</taxon>
        <taxon>Pseudomonadati</taxon>
        <taxon>Pseudomonadota</taxon>
        <taxon>Gammaproteobacteria</taxon>
        <taxon>Aeromonadales</taxon>
        <taxon>Aeromonadaceae</taxon>
        <taxon>Aeromonas</taxon>
    </lineage>
</organism>
<keyword id="KW-0687">Ribonucleoprotein</keyword>
<keyword id="KW-0689">Ribosomal protein</keyword>
<gene>
    <name evidence="1" type="primary">rpmA</name>
    <name type="ordered locus">ASA_3362</name>
</gene>
<accession>A4SR18</accession>
<sequence>MAHKKAGGSSRNGRDSEAKRLGVKRFGGETVLAGSIIVRQRGTKFHAGTNVGLGTDHTLYAKATGKILFEVKGPLNRKYVSIVAE</sequence>
<evidence type="ECO:0000255" key="1">
    <source>
        <dbReference type="HAMAP-Rule" id="MF_00539"/>
    </source>
</evidence>
<evidence type="ECO:0000256" key="2">
    <source>
        <dbReference type="SAM" id="MobiDB-lite"/>
    </source>
</evidence>
<evidence type="ECO:0000305" key="3"/>
<reference key="1">
    <citation type="journal article" date="2008" name="BMC Genomics">
        <title>The genome of Aeromonas salmonicida subsp. salmonicida A449: insights into the evolution of a fish pathogen.</title>
        <authorList>
            <person name="Reith M.E."/>
            <person name="Singh R.K."/>
            <person name="Curtis B."/>
            <person name="Boyd J.M."/>
            <person name="Bouevitch A."/>
            <person name="Kimball J."/>
            <person name="Munholland J."/>
            <person name="Murphy C."/>
            <person name="Sarty D."/>
            <person name="Williams J."/>
            <person name="Nash J.H."/>
            <person name="Johnson S.C."/>
            <person name="Brown L.L."/>
        </authorList>
    </citation>
    <scope>NUCLEOTIDE SEQUENCE [LARGE SCALE GENOMIC DNA]</scope>
    <source>
        <strain>A449</strain>
    </source>
</reference>
<protein>
    <recommendedName>
        <fullName evidence="1">Large ribosomal subunit protein bL27</fullName>
    </recommendedName>
    <alternativeName>
        <fullName evidence="3">50S ribosomal protein L27</fullName>
    </alternativeName>
</protein>
<comment type="similarity">
    <text evidence="1">Belongs to the bacterial ribosomal protein bL27 family.</text>
</comment>